<accession>Q5AAU3</accession>
<accession>A0A1D8PDX6</accession>
<dbReference type="EMBL" id="CP017623">
    <property type="protein sequence ID" value="AOW26347.1"/>
    <property type="molecule type" value="Genomic_DNA"/>
</dbReference>
<dbReference type="RefSeq" id="XP_718807.2">
    <property type="nucleotide sequence ID" value="XM_713714.2"/>
</dbReference>
<dbReference type="SMR" id="Q5AAU3"/>
<dbReference type="FunCoup" id="Q5AAU3">
    <property type="interactions" value="758"/>
</dbReference>
<dbReference type="STRING" id="237561.Q5AAU3"/>
<dbReference type="EnsemblFungi" id="C1_06930W_A-T">
    <property type="protein sequence ID" value="C1_06930W_A-T-p1"/>
    <property type="gene ID" value="C1_06930W_A"/>
</dbReference>
<dbReference type="GeneID" id="3639524"/>
<dbReference type="KEGG" id="cal:CAALFM_C106930WA"/>
<dbReference type="CGD" id="CAL0000193385">
    <property type="gene designation" value="PGA63"/>
</dbReference>
<dbReference type="VEuPathDB" id="FungiDB:C1_06930W_A"/>
<dbReference type="eggNOG" id="KOG0307">
    <property type="taxonomic scope" value="Eukaryota"/>
</dbReference>
<dbReference type="HOGENOM" id="CLU_003033_2_0_1"/>
<dbReference type="InParanoid" id="Q5AAU3"/>
<dbReference type="OMA" id="WLERPCG"/>
<dbReference type="OrthoDB" id="542917at2759"/>
<dbReference type="PRO" id="PR:Q5AAU3"/>
<dbReference type="Proteomes" id="UP000000559">
    <property type="component" value="Chromosome 1"/>
</dbReference>
<dbReference type="GO" id="GO:0015629">
    <property type="term" value="C:actin cytoskeleton"/>
    <property type="evidence" value="ECO:0007669"/>
    <property type="project" value="InterPro"/>
</dbReference>
<dbReference type="GO" id="GO:0030127">
    <property type="term" value="C:COPII vesicle coat"/>
    <property type="evidence" value="ECO:0000318"/>
    <property type="project" value="GO_Central"/>
</dbReference>
<dbReference type="GO" id="GO:0070971">
    <property type="term" value="C:endoplasmic reticulum exit site"/>
    <property type="evidence" value="ECO:0000318"/>
    <property type="project" value="GO_Central"/>
</dbReference>
<dbReference type="GO" id="GO:0005789">
    <property type="term" value="C:endoplasmic reticulum membrane"/>
    <property type="evidence" value="ECO:0007669"/>
    <property type="project" value="UniProtKB-SubCell"/>
</dbReference>
<dbReference type="GO" id="GO:0005198">
    <property type="term" value="F:structural molecule activity"/>
    <property type="evidence" value="ECO:0000318"/>
    <property type="project" value="GO_Central"/>
</dbReference>
<dbReference type="GO" id="GO:0007155">
    <property type="term" value="P:cell adhesion"/>
    <property type="evidence" value="ECO:0007669"/>
    <property type="project" value="InterPro"/>
</dbReference>
<dbReference type="GO" id="GO:0090110">
    <property type="term" value="P:COPII-coated vesicle cargo loading"/>
    <property type="evidence" value="ECO:0000318"/>
    <property type="project" value="GO_Central"/>
</dbReference>
<dbReference type="GO" id="GO:0007029">
    <property type="term" value="P:endoplasmic reticulum organization"/>
    <property type="evidence" value="ECO:0000318"/>
    <property type="project" value="GO_Central"/>
</dbReference>
<dbReference type="GO" id="GO:1902953">
    <property type="term" value="P:positive regulation of ER to Golgi vesicle-mediated transport"/>
    <property type="evidence" value="ECO:0007669"/>
    <property type="project" value="EnsemblFungi"/>
</dbReference>
<dbReference type="GO" id="GO:0070863">
    <property type="term" value="P:positive regulation of protein exit from endoplasmic reticulum"/>
    <property type="evidence" value="ECO:0007669"/>
    <property type="project" value="EnsemblFungi"/>
</dbReference>
<dbReference type="GO" id="GO:0015031">
    <property type="term" value="P:protein transport"/>
    <property type="evidence" value="ECO:0007669"/>
    <property type="project" value="UniProtKB-KW"/>
</dbReference>
<dbReference type="FunFam" id="1.20.940.10:FF:000007">
    <property type="entry name" value="Protein transport protein (SEC31), putative"/>
    <property type="match status" value="1"/>
</dbReference>
<dbReference type="FunFam" id="2.130.10.10:FF:000526">
    <property type="entry name" value="Protein transport protein SEC31"/>
    <property type="match status" value="1"/>
</dbReference>
<dbReference type="Gene3D" id="1.25.40.1030">
    <property type="match status" value="1"/>
</dbReference>
<dbReference type="Gene3D" id="1.20.940.10">
    <property type="entry name" value="Functional domain of the splicing factor Prp18"/>
    <property type="match status" value="1"/>
</dbReference>
<dbReference type="Gene3D" id="2.130.10.10">
    <property type="entry name" value="YVTN repeat-like/Quinoprotein amine dehydrogenase"/>
    <property type="match status" value="1"/>
</dbReference>
<dbReference type="InterPro" id="IPR040251">
    <property type="entry name" value="SEC31-like"/>
</dbReference>
<dbReference type="InterPro" id="IPR009917">
    <property type="entry name" value="SRA1/Sec31"/>
</dbReference>
<dbReference type="InterPro" id="IPR000633">
    <property type="entry name" value="Vinculin_CS"/>
</dbReference>
<dbReference type="InterPro" id="IPR015943">
    <property type="entry name" value="WD40/YVTN_repeat-like_dom_sf"/>
</dbReference>
<dbReference type="InterPro" id="IPR019775">
    <property type="entry name" value="WD40_repeat_CS"/>
</dbReference>
<dbReference type="InterPro" id="IPR036322">
    <property type="entry name" value="WD40_repeat_dom_sf"/>
</dbReference>
<dbReference type="InterPro" id="IPR001680">
    <property type="entry name" value="WD40_rpt"/>
</dbReference>
<dbReference type="PANTHER" id="PTHR13923">
    <property type="entry name" value="SEC31-RELATED PROTEIN"/>
    <property type="match status" value="1"/>
</dbReference>
<dbReference type="PANTHER" id="PTHR13923:SF11">
    <property type="entry name" value="SECRETORY 31, ISOFORM D"/>
    <property type="match status" value="1"/>
</dbReference>
<dbReference type="Pfam" id="PF07304">
    <property type="entry name" value="SRA1"/>
    <property type="match status" value="1"/>
</dbReference>
<dbReference type="Pfam" id="PF00400">
    <property type="entry name" value="WD40"/>
    <property type="match status" value="2"/>
</dbReference>
<dbReference type="SMART" id="SM00320">
    <property type="entry name" value="WD40"/>
    <property type="match status" value="6"/>
</dbReference>
<dbReference type="SUPFAM" id="SSF50978">
    <property type="entry name" value="WD40 repeat-like"/>
    <property type="match status" value="1"/>
</dbReference>
<dbReference type="PROSITE" id="PS00678">
    <property type="entry name" value="WD_REPEATS_1"/>
    <property type="match status" value="2"/>
</dbReference>
<dbReference type="PROSITE" id="PS50082">
    <property type="entry name" value="WD_REPEATS_2"/>
    <property type="match status" value="2"/>
</dbReference>
<dbReference type="PROSITE" id="PS50294">
    <property type="entry name" value="WD_REPEATS_REGION"/>
    <property type="match status" value="1"/>
</dbReference>
<gene>
    <name type="primary">PGA63</name>
    <name type="synonym">SEC31</name>
    <name type="ordered locus">CAALFM_C106930WA</name>
    <name type="ORF">CaO19.13598</name>
    <name type="ORF">CaO19.6217</name>
</gene>
<proteinExistence type="inferred from homology"/>
<sequence length="1265" mass="136310">MVKISEIARTSTFAWSSKNLPLLAAGTVAGAVDINFSSSATLELWDIFSPTNKTEPIFSATVDNRFYALAWSKPFEGRPQGLLAGAFENGTVEFWDADVLIKTKDLAKASVHKSNKHTGAVKSLQFNPIQNHVLVTGGSNGQIFIWDTKTFSEPFAPGQAMTPMDEITSVSWNNSVSHILASTGNGGYTSIWDLKTKREVLHLSYTGAGGRANFSYVSWHPSQSTKLITASDNDSCPLILTWDLRNSNAPEKILEGHKKGVLSLDWCKQDPTLLLSSGKDNSTFLWNPIEGIKLGEYPTTANWAFETKFAPAAPDIFATASFDGKVVVQTIQDTSPSVSTKVASTDDNEFWSELSTTETQQPVFEVKQAPNWLKNPSNVSFGFGSKLVIINTDSSGKSTVKVDKFVAKGQEKTEKLFKDLKNDNYSSLIQDKLEGETVNENNKSDWEVLKRLSETGKESLFEDANNDEKEATSPETKKENGEDDFFEHLGNGETAKKEEVFVPEGNFKIFTNNENEDSKKLINLILRNKTEEAVSSCLEQKKLVEALVLALDGSDDVKQQVKNAYFKKNKENNLSRVIYNASTKNVTDLVAHANVENWKEVAVGISSFTTDSSEYNSKMSELGDRILKAKDGKRNDAVVCYLAGGALDKISNLWLQELPDYESELLSLKSEEITSPSDARLQALTNFVEKVATYRYITKSTGEFSGPMVEPLAKAILEFVNLVAGSGDFDLANKFLQLLPSEFSGTEKERILKATSKAVEPASAVKSSANAKIAKPASSSGQTRASINAVPAPAYAPPVQAPPVQAPQPPLVQQQQQQQQQQQPNRYGYAQPTYAGAAPKTNPYARTNPYAPSNNIYKPASPVATPSSLSGTTSGVPPPPPKASYKHETEGWNDLPDTFKAKTAAPRRAAAAATPPVSTPTPVSAPAFGSPGQPPSAPSQPGSVGSVSSAGYPKKTFSATNVLPPPPKSISRSTSRTTVPTSSTVPASPKPTPVSNKYAPAVTSDASQPPSSGFASPTLNSSPRLAKNPYAPSVTEQLPPKISYATPPAHHLANNGPSTPSYAPPKNPYAVPPSTSVSHAGIAPPPPAPKLGSAAPPPPQPFGSSMSMPVQPAFNGVPPPPPPVGRAVSTPAAAKIEQPPAREPELPVQSKHPKGDRTHIPENSLPIYNSLTNVLEAIKPNIPEKYAKHGTDMEQRLNILFDHLNNEEISNGVIELLLKVATSLESKDFANATAVNLQIATEHSDEIGNWHTGLKRLITMAEAMY</sequence>
<keyword id="KW-0968">Cytoplasmic vesicle</keyword>
<keyword id="KW-0256">Endoplasmic reticulum</keyword>
<keyword id="KW-0931">ER-Golgi transport</keyword>
<keyword id="KW-0472">Membrane</keyword>
<keyword id="KW-0653">Protein transport</keyword>
<keyword id="KW-1185">Reference proteome</keyword>
<keyword id="KW-0677">Repeat</keyword>
<keyword id="KW-0813">Transport</keyword>
<keyword id="KW-0853">WD repeat</keyword>
<feature type="chain" id="PRO_0000295432" description="Protein transport protein SEC31">
    <location>
        <begin position="1"/>
        <end position="1265"/>
    </location>
</feature>
<feature type="repeat" description="WD 1">
    <location>
        <begin position="6"/>
        <end position="46"/>
    </location>
</feature>
<feature type="repeat" description="WD 2">
    <location>
        <begin position="61"/>
        <end position="105"/>
    </location>
</feature>
<feature type="repeat" description="WD 3">
    <location>
        <begin position="116"/>
        <end position="156"/>
    </location>
</feature>
<feature type="repeat" description="WD 4">
    <location>
        <begin position="162"/>
        <end position="202"/>
    </location>
</feature>
<feature type="repeat" description="WD 5">
    <location>
        <begin position="209"/>
        <end position="252"/>
    </location>
</feature>
<feature type="repeat" description="WD 6">
    <location>
        <begin position="256"/>
        <end position="296"/>
    </location>
</feature>
<feature type="repeat" description="WD 7">
    <location>
        <begin position="299"/>
        <end position="339"/>
    </location>
</feature>
<feature type="repeat" description="WD 8; interaction with SEC13" evidence="2">
    <location>
        <begin position="380"/>
        <end position="403"/>
    </location>
</feature>
<feature type="region of interest" description="Disordered" evidence="3">
    <location>
        <begin position="457"/>
        <end position="485"/>
    </location>
</feature>
<feature type="region of interest" description="Disordered" evidence="3">
    <location>
        <begin position="765"/>
        <end position="784"/>
    </location>
</feature>
<feature type="region of interest" description="Disordered" evidence="3">
    <location>
        <begin position="793"/>
        <end position="1163"/>
    </location>
</feature>
<feature type="compositionally biased region" description="Basic and acidic residues" evidence="3">
    <location>
        <begin position="457"/>
        <end position="480"/>
    </location>
</feature>
<feature type="compositionally biased region" description="Pro residues" evidence="3">
    <location>
        <begin position="794"/>
        <end position="810"/>
    </location>
</feature>
<feature type="compositionally biased region" description="Low complexity" evidence="3">
    <location>
        <begin position="811"/>
        <end position="824"/>
    </location>
</feature>
<feature type="compositionally biased region" description="Low complexity" evidence="3">
    <location>
        <begin position="865"/>
        <end position="875"/>
    </location>
</feature>
<feature type="compositionally biased region" description="Low complexity" evidence="3">
    <location>
        <begin position="901"/>
        <end position="931"/>
    </location>
</feature>
<feature type="compositionally biased region" description="Low complexity" evidence="3">
    <location>
        <begin position="939"/>
        <end position="951"/>
    </location>
</feature>
<feature type="compositionally biased region" description="Low complexity" evidence="3">
    <location>
        <begin position="969"/>
        <end position="987"/>
    </location>
</feature>
<feature type="compositionally biased region" description="Polar residues" evidence="3">
    <location>
        <begin position="1004"/>
        <end position="1023"/>
    </location>
</feature>
<feature type="compositionally biased region" description="Pro residues" evidence="3">
    <location>
        <begin position="1062"/>
        <end position="1071"/>
    </location>
</feature>
<feature type="compositionally biased region" description="Pro residues" evidence="3">
    <location>
        <begin position="1083"/>
        <end position="1101"/>
    </location>
</feature>
<organism>
    <name type="scientific">Candida albicans (strain SC5314 / ATCC MYA-2876)</name>
    <name type="common">Yeast</name>
    <dbReference type="NCBI Taxonomy" id="237561"/>
    <lineage>
        <taxon>Eukaryota</taxon>
        <taxon>Fungi</taxon>
        <taxon>Dikarya</taxon>
        <taxon>Ascomycota</taxon>
        <taxon>Saccharomycotina</taxon>
        <taxon>Pichiomycetes</taxon>
        <taxon>Debaryomycetaceae</taxon>
        <taxon>Candida/Lodderomyces clade</taxon>
        <taxon>Candida</taxon>
    </lineage>
</organism>
<name>SEC31_CANAL</name>
<evidence type="ECO:0000250" key="1"/>
<evidence type="ECO:0000255" key="2">
    <source>
        <dbReference type="PROSITE-ProRule" id="PRU00221"/>
    </source>
</evidence>
<evidence type="ECO:0000256" key="3">
    <source>
        <dbReference type="SAM" id="MobiDB-lite"/>
    </source>
</evidence>
<evidence type="ECO:0000305" key="4"/>
<comment type="function">
    <text evidence="1">Component of the coat protein complex II (COPII) which promotes the formation of transport vesicles from the endoplasmic reticulum (ER). The coat has two main functions, the physical deformation of the endoplasmic reticulum membrane into vesicles and the selection of cargo molecules (By similarity).</text>
</comment>
<comment type="subunit">
    <text evidence="1">The COPII coat is composed of at least 5 proteins: the SEC23/24 complex, the SEC13/31 complex, and the protein SAR1. SEC13 and SEC31 make a 2:2 tetramer that forms the edge element of the COPII outer coat. The tetramer self-assembles in multiple copies to form the complete polyhedral cage. Interacts (via WD 8) with SEC13 (By similarity).</text>
</comment>
<comment type="subcellular location">
    <subcellularLocation>
        <location evidence="1">Cytoplasmic vesicle</location>
        <location evidence="1">COPII-coated vesicle membrane</location>
        <topology evidence="1">Peripheral membrane protein</topology>
        <orientation evidence="1">Cytoplasmic side</orientation>
    </subcellularLocation>
    <subcellularLocation>
        <location evidence="1">Endoplasmic reticulum membrane</location>
        <topology evidence="1">Peripheral membrane protein</topology>
        <orientation evidence="1">Cytoplasmic side</orientation>
    </subcellularLocation>
</comment>
<comment type="similarity">
    <text evidence="4">Belongs to the WD repeat SEC31 family.</text>
</comment>
<protein>
    <recommendedName>
        <fullName>Protein transport protein SEC31</fullName>
    </recommendedName>
</protein>
<reference key="1">
    <citation type="journal article" date="2004" name="Proc. Natl. Acad. Sci. U.S.A.">
        <title>The diploid genome sequence of Candida albicans.</title>
        <authorList>
            <person name="Jones T."/>
            <person name="Federspiel N.A."/>
            <person name="Chibana H."/>
            <person name="Dungan J."/>
            <person name="Kalman S."/>
            <person name="Magee B.B."/>
            <person name="Newport G."/>
            <person name="Thorstenson Y.R."/>
            <person name="Agabian N."/>
            <person name="Magee P.T."/>
            <person name="Davis R.W."/>
            <person name="Scherer S."/>
        </authorList>
    </citation>
    <scope>NUCLEOTIDE SEQUENCE [LARGE SCALE GENOMIC DNA]</scope>
    <source>
        <strain>SC5314 / ATCC MYA-2876</strain>
    </source>
</reference>
<reference key="2">
    <citation type="journal article" date="2007" name="Genome Biol.">
        <title>Assembly of the Candida albicans genome into sixteen supercontigs aligned on the eight chromosomes.</title>
        <authorList>
            <person name="van het Hoog M."/>
            <person name="Rast T.J."/>
            <person name="Martchenko M."/>
            <person name="Grindle S."/>
            <person name="Dignard D."/>
            <person name="Hogues H."/>
            <person name="Cuomo C."/>
            <person name="Berriman M."/>
            <person name="Scherer S."/>
            <person name="Magee B.B."/>
            <person name="Whiteway M."/>
            <person name="Chibana H."/>
            <person name="Nantel A."/>
            <person name="Magee P.T."/>
        </authorList>
    </citation>
    <scope>GENOME REANNOTATION</scope>
    <source>
        <strain>SC5314 / ATCC MYA-2876</strain>
    </source>
</reference>
<reference key="3">
    <citation type="journal article" date="2013" name="Genome Biol.">
        <title>Assembly of a phased diploid Candida albicans genome facilitates allele-specific measurements and provides a simple model for repeat and indel structure.</title>
        <authorList>
            <person name="Muzzey D."/>
            <person name="Schwartz K."/>
            <person name="Weissman J.S."/>
            <person name="Sherlock G."/>
        </authorList>
    </citation>
    <scope>NUCLEOTIDE SEQUENCE [LARGE SCALE GENOMIC DNA]</scope>
    <scope>GENOME REANNOTATION</scope>
    <source>
        <strain>SC5314 / ATCC MYA-2876</strain>
    </source>
</reference>